<accession>P03612</accession>
<feature type="initiator methionine" description="Removed; by host" evidence="1">
    <location>
        <position position="1"/>
    </location>
</feature>
<feature type="chain" id="PRO_0000164843" description="Capsid protein">
    <location>
        <begin position="2"/>
        <end position="130"/>
    </location>
</feature>
<feature type="region of interest" description="Viral RNA-binding" evidence="7">
    <location>
        <begin position="32"/>
        <end position="105"/>
    </location>
</feature>
<feature type="mutagenesis site" description="Loss of repression of replicase translation. 80% loss of binding to the operator RNA in vivo." evidence="13 14">
    <original>T</original>
    <variation>A</variation>
    <location>
        <position position="46"/>
    </location>
</feature>
<feature type="mutagenesis site" description="Loss of repression of replicase. 20% loss of binding to the operator RNA in vivo." evidence="13 14">
    <original>T</original>
    <variation>S</variation>
    <location>
        <position position="60"/>
    </location>
</feature>
<feature type="mutagenesis site" description="No effect on the organization of the T=3 capsid, but with a loss of thermal stability. No effect on infectivity." evidence="13">
    <original>E</original>
    <variation>A</variation>
    <location>
        <position position="77"/>
    </location>
</feature>
<feature type="mutagenesis site" description="No effect on the organization of the T=3 capsid, but with a loss of thermal stability. Complete loss of infectivity." evidence="13">
    <original>P</original>
    <variation>A</variation>
    <location>
        <position position="79"/>
    </location>
</feature>
<feature type="mutagenesis site" description="Complete loss of viral assembly." evidence="9">
    <original>W</original>
    <variation>R</variation>
    <location>
        <position position="83"/>
    </location>
</feature>
<feature type="strand" evidence="18">
    <location>
        <begin position="8"/>
        <end position="11"/>
    </location>
</feature>
<feature type="strand" evidence="20">
    <location>
        <begin position="13"/>
        <end position="17"/>
    </location>
</feature>
<feature type="strand" evidence="18">
    <location>
        <begin position="19"/>
        <end position="27"/>
    </location>
</feature>
<feature type="strand" evidence="18">
    <location>
        <begin position="30"/>
        <end position="34"/>
    </location>
</feature>
<feature type="strand" evidence="19">
    <location>
        <begin position="35"/>
        <end position="37"/>
    </location>
</feature>
<feature type="strand" evidence="18">
    <location>
        <begin position="38"/>
        <end position="40"/>
    </location>
</feature>
<feature type="strand" evidence="18">
    <location>
        <begin position="44"/>
        <end position="53"/>
    </location>
</feature>
<feature type="strand" evidence="18">
    <location>
        <begin position="56"/>
        <end position="65"/>
    </location>
</feature>
<feature type="strand" evidence="18">
    <location>
        <begin position="70"/>
        <end position="75"/>
    </location>
</feature>
<feature type="strand" evidence="18">
    <location>
        <begin position="85"/>
        <end position="94"/>
    </location>
</feature>
<feature type="helix" evidence="18">
    <location>
        <begin position="99"/>
        <end position="112"/>
    </location>
</feature>
<feature type="helix" evidence="18">
    <location>
        <begin position="118"/>
        <end position="125"/>
    </location>
</feature>
<feature type="strand" evidence="19">
    <location>
        <begin position="127"/>
        <end position="129"/>
    </location>
</feature>
<reference key="1">
    <citation type="journal article" date="1972" name="Nature">
        <title>Nucleotide sequence of the gene coding for the bacteriophage MS2 coat protein.</title>
        <authorList>
            <person name="Min Jou W."/>
            <person name="Haegeman G."/>
            <person name="Ysebaert M."/>
            <person name="Fiers W."/>
        </authorList>
    </citation>
    <scope>NUCLEOTIDE SEQUENCE [MRNA]</scope>
</reference>
<reference key="2">
    <citation type="journal article" date="1997" name="Nucleic Acids Res.">
        <title>MS2 coat protein mutants which bind Qbeta RNA.</title>
        <authorList>
            <person name="Spingola M."/>
            <person name="Peabody D.S."/>
        </authorList>
    </citation>
    <scope>RNA-BINDING</scope>
    <scope>FUNCTION</scope>
</reference>
<reference key="3">
    <citation type="journal article" date="1998" name="Nucleic Acids Res.">
        <title>Dissecting the key recognition features of the MS2 bacteriophage translational repression complex.</title>
        <authorList>
            <person name="Lago H."/>
            <person name="Fonseca S.A."/>
            <person name="Murray J.B."/>
            <person name="Stonehouse N.J."/>
            <person name="Stockley P.G."/>
        </authorList>
    </citation>
    <scope>MUTAGENESIS OF THR-46; THR-60; GLU-77 AND PRO-79</scope>
</reference>
<reference key="4">
    <citation type="journal article" date="2016" name="J. Mol. Biol.">
        <title>Direct evidence for packaging signal-mediated assembly of bacteriophage MS2.</title>
        <authorList>
            <person name="Rolfsson O."/>
            <person name="Middleton S."/>
            <person name="Manfield I.W."/>
            <person name="White S.J."/>
            <person name="Fan B."/>
            <person name="Vaughan R."/>
            <person name="Ranson N.A."/>
            <person name="Dykeman E."/>
            <person name="Twarock R."/>
            <person name="Ford J."/>
            <person name="Kao C.C."/>
            <person name="Stockley P.G."/>
        </authorList>
    </citation>
    <scope>FUNCTION</scope>
    <scope>RNA-BINDING</scope>
</reference>
<reference key="5">
    <citation type="journal article" date="2016" name="Bacteriophage">
        <title>Bacteriophage MS2 genomic RNA encodes an assembly instruction manual for its capsid.</title>
        <authorList>
            <person name="Stockley P.G."/>
            <person name="White S.J."/>
            <person name="Dykeman E."/>
            <person name="Manfield I."/>
            <person name="Rolfsson O."/>
            <person name="Patel N."/>
            <person name="Bingham R."/>
            <person name="Barker A."/>
            <person name="Wroblewski E."/>
            <person name="Chandler-Bostock R."/>
            <person name="Weiss E.U."/>
            <person name="Ranson N.A."/>
            <person name="Tuma R."/>
            <person name="Twarock R."/>
        </authorList>
    </citation>
    <scope>REVIEW</scope>
</reference>
<reference key="6">
    <citation type="journal article" date="1990" name="Nature">
        <title>The three-dimensional structure of the bacterial virus MS2.</title>
        <authorList>
            <person name="Valegaard K."/>
            <person name="Liljas L."/>
            <person name="Fridborg K."/>
            <person name="Unge T."/>
        </authorList>
    </citation>
    <scope>X-RAY CRYSTALLOGRAPHY (3.3 ANGSTROMS)</scope>
</reference>
<reference key="7">
    <citation type="journal article" date="1991" name="Acta Crystallogr. B">
        <title>Structure determination of the bacteriophage MS2.</title>
        <authorList>
            <person name="Valegard K."/>
            <person name="Liljas L."/>
            <person name="Fridborg K."/>
            <person name="Unge T."/>
        </authorList>
    </citation>
    <scope>X-RAY CRYSTALLOGRAPHY (3.3 ANGSTROMS)</scope>
</reference>
<reference key="8">
    <citation type="journal article" date="1993" name="J. Mol. Biol.">
        <title>The refined structure of bacteriophage MS2 at 2.8-A resolution.</title>
        <authorList>
            <person name="Golmohammadi R."/>
            <person name="Valegaard K."/>
            <person name="Fridborg K."/>
            <person name="Liljas L."/>
        </authorList>
    </citation>
    <scope>X-RAY CRYSTALLOGRAPHY (2.8 ANGSTROMS)</scope>
    <scope>FUNCTION</scope>
    <scope>SUBCELLULAR LOCATION</scope>
    <scope>SUBUNIT</scope>
</reference>
<reference key="9">
    <citation type="journal article" date="1994" name="Nature">
        <title>Crystal structure of an RNA bacteriophage coat protein-operator complex.</title>
        <authorList>
            <person name="Valegaard K."/>
            <person name="Murray J.B."/>
            <person name="Sotckley P.G."/>
            <person name="Stonehouse N.J."/>
            <person name="Liljas L."/>
        </authorList>
    </citation>
    <scope>X-RAY CRYSTALLOGRAPHY (3.0 ANGSTROMS) IN COMPLEX WITH RNA</scope>
    <scope>FUNCTION</scope>
</reference>
<reference key="10">
    <citation type="journal article" date="1995" name="Structure">
        <title>Crystal structure of the MS2 coat protein dimer: implications for RNA binding and virus assembly.</title>
        <authorList>
            <person name="Ni C.Z."/>
            <person name="Syed R."/>
            <person name="Kodandapani R."/>
            <person name="Wickersham J."/>
            <person name="Peabody D.S."/>
            <person name="Ely K.R."/>
        </authorList>
    </citation>
    <scope>X-RAY CRYSTALLOGRAPHY (2.00 ANGSTROMS)</scope>
    <scope>SUBUNIT</scope>
    <scope>MUTAGENESIS OF TRP-83</scope>
</reference>
<reference key="11">
    <citation type="journal article" date="1996" name="J. Mol. Biol.">
        <title>Crystal structures of MS2 capsids with mutations in the subunit FG loop.</title>
        <authorList>
            <person name="Stonehouse N.J."/>
            <person name="Valegaard K."/>
            <person name="Golmohammadi R."/>
            <person name="van den Worm S."/>
            <person name="Walton C."/>
            <person name="Stockley P.G."/>
            <person name="Liljas L."/>
        </authorList>
    </citation>
    <scope>X-RAY CRYSTALLOGRAPHY (2.7 ANGSTROMS)</scope>
</reference>
<reference key="12">
    <citation type="journal article" date="1997" name="J. Mol. Biol.">
        <title>The three-dimensional structures of two complexes between recombinant MS2 capsids and RNA operator fragments reveal sequence-specific protein-RNA interactions.</title>
        <authorList>
            <person name="Valegard K."/>
            <person name="Murray J.B."/>
            <person name="Stonehouse N.J."/>
            <person name="van den Worm S."/>
            <person name="Stockley P.G."/>
            <person name="Liljas L."/>
        </authorList>
    </citation>
    <scope>X-RAY CRYSTALLOGRAPHY (2.70 ANGSTROMS) IN COMPLEX WITH RNA</scope>
    <scope>FUNCTION</scope>
    <scope>RNA-BINDING</scope>
</reference>
<reference key="13">
    <citation type="journal article" date="1998" name="Nat. Struct. Biol.">
        <title>Crystal structure of an RNA aptamer-protein complex at 2.8-A resolution.</title>
        <authorList>
            <person name="Convery M.A."/>
            <person name="Rowsell S."/>
            <person name="Stonehouse N.J."/>
            <person name="Ellington A.D."/>
            <person name="Hirao I."/>
            <person name="Murray J.B."/>
            <person name="Peabody D.S."/>
            <person name="Phillips S.E.V."/>
            <person name="Stockley P.G."/>
        </authorList>
    </citation>
    <scope>X-RAY CRYSTALLOGRAPHY (2.80 ANGSTROMS) IN COMPLEX WITH RNA</scope>
    <scope>RNA-BINDING</scope>
</reference>
<reference key="14">
    <citation type="journal article" date="1998" name="Nat. Struct. Biol.">
        <title>Crystal structures of a series of RNA aptamers complexed to the same protein target.</title>
        <authorList>
            <person name="Rowsell S."/>
            <person name="Stonehouse N.J."/>
            <person name="Convery M.A."/>
            <person name="Adams C.J."/>
            <person name="Ellington A.D."/>
            <person name="Hirao I."/>
            <person name="Peabody D.S."/>
            <person name="Stockley P.G."/>
            <person name="Phillips S.E."/>
        </authorList>
    </citation>
    <scope>X-RAY CRYSTALLOGRAPHY (2.8 ANGSTROMS) IN COMPLEX WITH RNA</scope>
</reference>
<reference key="15">
    <citation type="journal article" date="1998" name="Nucleic Acids Res.">
        <title>Crystal structures of MS2 coat protein mutants in complex with wild-type RNA operator fragments.</title>
        <authorList>
            <person name="van den Worm S.H."/>
            <person name="Stonehouse N.J."/>
            <person name="Valegard K."/>
            <person name="Murray J.B."/>
            <person name="Walton C."/>
            <person name="Fridborg K."/>
            <person name="Stockley P.G."/>
            <person name="Liljas L."/>
        </authorList>
    </citation>
    <scope>X-RAY CRYSTALLOGRAPHY (2.80 ANGSTROMS) IN COMPLEX WITH RNA</scope>
    <scope>MUTAGENESIS OF THR-46 AND THR-60</scope>
    <scope>FUNCTION</scope>
    <scope>RNA-BINDING</scope>
</reference>
<reference key="16">
    <citation type="journal article" date="1999" name="RNA">
        <title>Crystallographic studies of RNA hairpins in complexes with recombinant MS2 capsids: implications for binding requirements.</title>
        <authorList>
            <person name="Grahn E."/>
            <person name="Stonehouse N.J."/>
            <person name="Murray J.B."/>
            <person name="van den Worm S."/>
            <person name="Valegard K."/>
            <person name="Fridborg K."/>
            <person name="Stockley P.G."/>
            <person name="Liljas L."/>
        </authorList>
    </citation>
    <scope>X-RAY CRYSTALLOGRAPHY (2.86 ANGSTROMS) IN COMPLEX WITH RNA</scope>
    <scope>RNA-BINDING</scope>
</reference>
<reference key="17">
    <citation type="journal article" date="2000" name="Nucleic Acids Res.">
        <title>Deletion of a single hydrogen bonding atom from the MS2 RNA operator leads to dramatic rearrangements at the RNA-coat protein interface.</title>
        <authorList>
            <person name="Grahn E."/>
            <person name="Stonehouse N.J."/>
            <person name="Adams C.J."/>
            <person name="Fridborg K."/>
            <person name="Beigelman L."/>
            <person name="Matulic-Adamic J."/>
            <person name="Warriner S.L."/>
            <person name="Stockley P.G."/>
            <person name="Liljas L."/>
        </authorList>
    </citation>
    <scope>X-RAY CRYSTALLOGRAPHY (2.85 ANGSTROMS) IN COMPLEX WITH RNA</scope>
</reference>
<reference key="18">
    <citation type="journal article" date="2001" name="RNA">
        <title>Structural basis of pyrimidine specificity in the MS2 RNA hairpin-coat-protein complex.</title>
        <authorList>
            <person name="Grahn E."/>
            <person name="Moss T."/>
            <person name="Helgstrand C."/>
            <person name="Fridborg K."/>
            <person name="Sundaram M."/>
            <person name="Tars K."/>
            <person name="Lago H."/>
            <person name="Stonehouse N.J."/>
            <person name="Davis D.R."/>
            <person name="Stockley P.G."/>
            <person name="Liljas L."/>
        </authorList>
    </citation>
    <scope>X-RAY CRYSTALLOGRAPHY (2.20 ANGSTROMS) IN COMPLEX WITH RNA</scope>
    <scope>RNA-BINDING</scope>
</reference>
<reference key="19">
    <citation type="journal article" date="2002" name="Nucleic Acids Res.">
        <title>Investigating the structural basis of purine specificity in the structures of MS2 coat protein RNA translational operator hairpins.</title>
        <authorList>
            <person name="Helgstrand C."/>
            <person name="Grahn E."/>
            <person name="Moss T."/>
            <person name="Stonehouse N.J."/>
            <person name="Tars K."/>
            <person name="Stockley P.G."/>
            <person name="Liljas L."/>
        </authorList>
    </citation>
    <scope>X-RAY CRYSTALLOGRAPHY (2.56 ANGSTROMS) IN COMPLEX WITH RNA</scope>
    <scope>RNA-BINDING</scope>
</reference>
<reference key="20">
    <citation type="journal article" date="2003" name="J. Mol. Biol.">
        <title>Visualization by cryo-electron microscopy of genomic RNA that binds to the protein capsid inside bacteriophage MS2.</title>
        <authorList>
            <person name="Koning R."/>
            <person name="van den Worm S."/>
            <person name="Plaisier J.R."/>
            <person name="van Duin J."/>
            <person name="Pieter Abrahams J."/>
            <person name="Koerten H."/>
        </authorList>
    </citation>
    <scope>STRUCTURE BY ELECTRON MICROSCOPY OF THE VIRION</scope>
    <scope>FUNCTION</scope>
    <scope>SUBUNIT</scope>
</reference>
<reference key="21">
    <citation type="journal article" date="2004" name="RNA">
        <title>The crystal structure of a high affinity RNA stem-loop complexed with the bacteriophage MS2 capsid: further challenges in the modeling of ligand-RNA interactions.</title>
        <authorList>
            <person name="Horn W.T."/>
            <person name="Convery M.A."/>
            <person name="Stonehouse N.J."/>
            <person name="Adams C.J."/>
            <person name="Liljas L."/>
            <person name="Phillips S.E."/>
            <person name="Stockley P.G."/>
        </authorList>
    </citation>
    <scope>X-RAY CRYSTALLOGRAPHY (2.85 ANGSTROMS) IN COMPLEX WITH RNA</scope>
</reference>
<reference key="22">
    <citation type="journal article" date="2006" name="Structure">
        <title>Structural basis of RNA binding discrimination between bacteriophages Qbeta and MS2.</title>
        <authorList>
            <person name="Horn W.T."/>
            <person name="Tars K."/>
            <person name="Grahn E."/>
            <person name="Helgstrand C."/>
            <person name="Baron A.J."/>
            <person name="Lago H."/>
            <person name="Adams C.J."/>
            <person name="Peabody D.S."/>
            <person name="Phillips S.E."/>
            <person name="Stonehouse N.J."/>
            <person name="Liljas L."/>
            <person name="Stockley P.G."/>
        </authorList>
    </citation>
    <scope>X-RAY CRYSTALLOGRAPHY (2.45 ANGSTROMS) IN COMPLEX WITH RNA</scope>
    <scope>FUNCTION</scope>
</reference>
<reference key="23">
    <citation type="journal article" date="2008" name="Protein Sci.">
        <title>Crystal packing of a bacteriophage MS2 coat protein mutant corresponds to octahedral particles.</title>
        <authorList>
            <person name="Plevka P."/>
            <person name="Tars K."/>
            <person name="Liljas L."/>
        </authorList>
    </citation>
    <scope>X-RAY CRYSTALLOGRAPHY (3.50 ANGSTROMS)</scope>
    <scope>FUNCTION</scope>
</reference>
<reference key="24">
    <citation type="journal article" date="2009" name="Protein Sci.">
        <title>Structure and stability of icosahedral particles of a covalent coat protein dimer of bacteriophage MS2.</title>
        <authorList>
            <person name="Plevka P."/>
            <person name="Tars K."/>
            <person name="Liljas L."/>
        </authorList>
    </citation>
    <scope>X-RAY CRYSTALLOGRAPHY (4.70 ANGSTROMS)</scope>
    <scope>SUBUNIT</scope>
</reference>
<reference key="25">
    <citation type="journal article" date="2013" name="Structure">
        <title>The asymmetric structure of an icosahedral virus bound to its receptor suggests a mechanism for genome release.</title>
        <authorList>
            <person name="Dent K.C."/>
            <person name="Thompson R."/>
            <person name="Barker A.M."/>
            <person name="Hiscox J.A."/>
            <person name="Barr J.N."/>
            <person name="Stockley P.G."/>
            <person name="Ranson N.A."/>
        </authorList>
    </citation>
    <scope>STRUCTURE BY ELECTRON MICROSCOPY (39.00 ANGSTROMS) IN COMPLEX WITH F-PILUS</scope>
    <scope>SUBCELLULAR LOCATION</scope>
</reference>
<reference key="26">
    <citation type="journal article" date="2016" name="Nano Lett.">
        <title>A selection for assembly reveals that a single amino acid mutant of the bacteriophage MS2 coat protein forms a smaller virus-like particle.</title>
        <authorList>
            <person name="Asensio M.A."/>
            <person name="Morella N.M."/>
            <person name="Jakobson C.M."/>
            <person name="Hartman E.C."/>
            <person name="Glasgow J.E."/>
            <person name="Sankaran B."/>
            <person name="Zwart P.H."/>
            <person name="Tullman-Ercek D."/>
        </authorList>
    </citation>
    <scope>X-RAY CRYSTALLOGRAPHY (2.20 ANGSTROMS) OF 2-130</scope>
</reference>
<comment type="function">
    <text evidence="2 4 7 8 14 17">Capsid protein self-assembles to form an icosahedral capsid with a T=3 symmetry, about 26 nm in diameter, and consisting of 89 capsid proteins dimers (178 capsid proteins) (PubMed:18662904, PubMed:8254664). Involved in viral genome encapsidation through the interaction between a capsid protein dimer and the multiple packaging signals present in the RNA genome (PubMed:26608810, PubMed:7523953, PubMed:9469847). The capsid also contains 1 copy of the A2 maturation protein (PubMed:8254664).</text>
</comment>
<comment type="function">
    <text evidence="3 11 12">Acts as a translational repressor of viral replicase synthesis late in infection. This latter function is the result of capsid protein interaction with an RNA hairpin which contains the replicase ribosome-binding site.</text>
</comment>
<comment type="subunit">
    <text evidence="5 9 10 16">Homodimer (PubMed:19521994, PubMed:7788292, PubMed:8254664). The capsid proteins form dimers that assemble by group of 5. Twelve such pentamers are linked together with free dimers (PubMed:8254664). The homodimers binds to the viral RNA via an operator hairpin, but also to many other RNA sequences in the viral genome; this interaction probably shifts the virus from the replicative to the assembly phase and ensures specific encapsidation of the viral genome (PubMed:12948491).</text>
</comment>
<comment type="interaction">
    <interactant intactId="EBI-781118">
        <id>P03612</id>
    </interactant>
    <interactant intactId="EBI-781118">
        <id>P03612</id>
        <label>-</label>
    </interactant>
    <organismsDiffer>false</organismsDiffer>
    <experiments>2</experiments>
</comment>
<comment type="subcellular location">
    <subcellularLocation>
        <location evidence="10">Virion</location>
    </subcellularLocation>
    <text evidence="6 17">The shell is composed of 178 copies of the capsid protein and 1 copy of the maturation protein.</text>
</comment>
<comment type="similarity">
    <text evidence="15">Belongs to the Leviviricetes capsid protein family.</text>
</comment>
<comment type="online information" name="Virus Particle ExploreR db">
    <link uri="https://viperdb.org/Info_Page.php?VDB=1e7x"/>
    <text>Icosahedral capsid structure</text>
</comment>
<comment type="online information" name="Virus Particle ExploreR db">
    <link uri="https://viperdb.org/Info_Page.php?VDB=1dzs"/>
    <text>Icosahedral capsid structure assembled from a chemically modified RNA genome hairpin variant</text>
</comment>
<comment type="online information" name="Virus Particle ExploreR db">
    <link uri="https://viperdb.org/Info_Page.php?VDB=1gkv"/>
    <text>Icosahedral capsid structure assembled from a modified RNA genome hairpin variant G7</text>
</comment>
<comment type="online information" name="Virus Particle ExploreR db">
    <link uri="https://viperdb.org/Info_Page.php?VDB=1gkw"/>
    <text>Icosahedral capsid structure assembled from modified RNA genome hairpin variant G10</text>
</comment>
<comment type="online information" name="Virus Particle ExploreR db">
    <link uri="https://viperdb.org/Info_Page.php?VDB=1kuo"/>
    <text>Icosahedral capsid structure assembled from modified RNA genome hairpin variant C10</text>
</comment>
<comment type="online information" name="Virus Particle ExploreR db">
    <link uri="https://viperdb.org/Info_Page.php?VDB=1mst"/>
    <text>Icosahedral capsid structure of mutant E77D</text>
</comment>
<comment type="online information" name="Virus Particle ExploreR db">
    <link uri="https://viperdb.org/Info_Page.php?VDB=1aq3"/>
    <text>Icosahedral capsid structure of mutant T60S</text>
</comment>
<comment type="online information" name="Virus Particle ExploreR db">
    <link uri="https://viperdb.org/Info_Page.php?VDB=1aq4"/>
    <text>Icosahedral capsid structure of mutant T46A</text>
</comment>
<comment type="online information" name="Virus Particle ExploreR db">
    <link uri="https://viperdb.org/Info_Page.php?VDB=1mva"/>
    <text>Icosahedral capsid structure of mutant T46A</text>
</comment>
<comment type="online information" name="Virus Particle ExploreR db">
    <link uri="https://viperdb.org/Info_Page.php?VDB=1mvb"/>
    <text>Icosahedral capsid structure of mutant T60S</text>
</comment>
<comment type="online information" name="Virus Particle ExploreR db">
    <link uri="https://viperdb.org/Info_Page.php?VDB=1bms"/>
    <text>Icosahedral capsid structure of mutant P79N</text>
</comment>
<comment type="online information" name="Virus Particle ExploreR db">
    <link uri="https://viperdb.org/Info_Page.php?VDB=1zdj"/>
    <text>Icosahedral capsid structure associated with 8 nt RNA</text>
</comment>
<comment type="online information" name="Virus Particle ExploreR db">
    <link uri="https://viperdb.org/Info_Page.php?VDB=1zdh"/>
    <text>Icosahedral capsid structure associated with 19 nt RNA</text>
</comment>
<comment type="online information" name="Virus Particle ExploreR db">
    <link uri="https://viperdb.org/Info_Page.php?VDB=1zdi"/>
    <text>Icosahedral capsid structure associated with 19 nt RNA</text>
</comment>
<comment type="online information" name="Virus Particle ExploreR db">
    <link uri="https://viperdb.org/Info_Page.php?VDB=1zdk"/>
    <text>Icosahedral capsid structure associated with 23 nt RNA</text>
</comment>
<comment type="online information" name="Virus Particle ExploreR db">
    <link uri="https://viperdb.org/Info_Page.php?VDB=2ms2"/>
    <text>Icosahedral capsid structure</text>
</comment>
<comment type="online information" name="Virus Particle ExploreR db">
    <link uri="https://viperdb.org/Info_Page.php?VDB=6msf"/>
    <text>Icosahedral capsid structure associated with a aptamer RNA</text>
</comment>
<comment type="online information" name="Virus Particle ExploreR db">
    <link uri="https://viperdb.org/Info_Page.php?VDB=1u1y"/>
    <text>Icosahedral capsid structure associated with a F5 aptamer RNA</text>
</comment>
<evidence type="ECO:0000250" key="1">
    <source>
        <dbReference type="UniProtKB" id="P69171"/>
    </source>
</evidence>
<evidence type="ECO:0000269" key="2">
    <source>
    </source>
</evidence>
<evidence type="ECO:0000269" key="3">
    <source>
    </source>
</evidence>
<evidence type="ECO:0000269" key="4">
    <source>
    </source>
</evidence>
<evidence type="ECO:0000269" key="5">
    <source>
    </source>
</evidence>
<evidence type="ECO:0000269" key="6">
    <source>
    </source>
</evidence>
<evidence type="ECO:0000269" key="7">
    <source>
    </source>
</evidence>
<evidence type="ECO:0000269" key="8">
    <source>
    </source>
</evidence>
<evidence type="ECO:0000269" key="9">
    <source>
    </source>
</evidence>
<evidence type="ECO:0000269" key="10">
    <source>
    </source>
</evidence>
<evidence type="ECO:0000269" key="11">
    <source>
    </source>
</evidence>
<evidence type="ECO:0000269" key="12">
    <source>
    </source>
</evidence>
<evidence type="ECO:0000269" key="13">
    <source>
    </source>
</evidence>
<evidence type="ECO:0000269" key="14">
    <source>
    </source>
</evidence>
<evidence type="ECO:0000305" key="15"/>
<evidence type="ECO:0000305" key="16">
    <source>
    </source>
</evidence>
<evidence type="ECO:0000305" key="17">
    <source>
    </source>
</evidence>
<evidence type="ECO:0007829" key="18">
    <source>
        <dbReference type="PDB" id="1MSC"/>
    </source>
</evidence>
<evidence type="ECO:0007829" key="19">
    <source>
        <dbReference type="PDB" id="2VTU"/>
    </source>
</evidence>
<evidence type="ECO:0007829" key="20">
    <source>
        <dbReference type="PDB" id="4ZOR"/>
    </source>
</evidence>
<protein>
    <recommendedName>
        <fullName>Capsid protein</fullName>
        <shortName>CP</shortName>
    </recommendedName>
    <alternativeName>
        <fullName>Coat protein</fullName>
    </alternativeName>
</protein>
<dbReference type="EMBL" id="V00642">
    <property type="protein sequence ID" value="CAA23989.1"/>
    <property type="molecule type" value="mRNA"/>
</dbReference>
<dbReference type="PIR" id="B04222">
    <property type="entry name" value="VCBPM2"/>
</dbReference>
<dbReference type="RefSeq" id="YP_009640125.1">
    <property type="nucleotide sequence ID" value="NC_001417.2"/>
</dbReference>
<dbReference type="PDB" id="1AQ3">
    <property type="method" value="X-ray"/>
    <property type="resolution" value="2.80 A"/>
    <property type="chains" value="A/B/C=2-130"/>
</dbReference>
<dbReference type="PDB" id="1AQ4">
    <property type="method" value="X-ray"/>
    <property type="resolution" value="3.00 A"/>
    <property type="chains" value="A/B/C=2-130"/>
</dbReference>
<dbReference type="PDB" id="1BMS">
    <property type="method" value="X-ray"/>
    <property type="resolution" value="2.70 A"/>
    <property type="chains" value="A/B/C=2-130"/>
</dbReference>
<dbReference type="PDB" id="1MSC">
    <property type="method" value="X-ray"/>
    <property type="resolution" value="2.00 A"/>
    <property type="chains" value="A=2-130"/>
</dbReference>
<dbReference type="PDB" id="1MST">
    <property type="method" value="X-ray"/>
    <property type="resolution" value="2.60 A"/>
    <property type="chains" value="A/B/C=2-130"/>
</dbReference>
<dbReference type="PDB" id="1MVA">
    <property type="method" value="X-ray"/>
    <property type="resolution" value="3.00 A"/>
    <property type="chains" value="A/B/C=2-130"/>
</dbReference>
<dbReference type="PDB" id="1MVB">
    <property type="method" value="X-ray"/>
    <property type="resolution" value="3.00 A"/>
    <property type="chains" value="A/B/C=2-130"/>
</dbReference>
<dbReference type="PDB" id="1U1Y">
    <property type="method" value="X-ray"/>
    <property type="resolution" value="2.85 A"/>
    <property type="chains" value="A/B/C=2-130"/>
</dbReference>
<dbReference type="PDB" id="1ZDH">
    <property type="method" value="X-ray"/>
    <property type="resolution" value="2.70 A"/>
    <property type="chains" value="A/B/C=2-130"/>
</dbReference>
<dbReference type="PDB" id="1ZDI">
    <property type="method" value="X-ray"/>
    <property type="resolution" value="2.70 A"/>
    <property type="chains" value="A/B/C=2-130"/>
</dbReference>
<dbReference type="PDB" id="1ZDJ">
    <property type="method" value="X-ray"/>
    <property type="resolution" value="2.90 A"/>
    <property type="chains" value="A/B/C=2-130"/>
</dbReference>
<dbReference type="PDB" id="1ZDK">
    <property type="method" value="X-ray"/>
    <property type="resolution" value="2.86 A"/>
    <property type="chains" value="A/B/C=2-130"/>
</dbReference>
<dbReference type="PDB" id="1ZSE">
    <property type="method" value="X-ray"/>
    <property type="resolution" value="3.00 A"/>
    <property type="chains" value="A/B/C=2-130"/>
</dbReference>
<dbReference type="PDB" id="2B2D">
    <property type="method" value="X-ray"/>
    <property type="resolution" value="2.90 A"/>
    <property type="chains" value="A/B/C=2-130"/>
</dbReference>
<dbReference type="PDB" id="2B2E">
    <property type="method" value="X-ray"/>
    <property type="resolution" value="3.15 A"/>
    <property type="chains" value="A/B/C=2-130"/>
</dbReference>
<dbReference type="PDB" id="2B2G">
    <property type="method" value="X-ray"/>
    <property type="resolution" value="3.02 A"/>
    <property type="chains" value="A/B/C=2-130"/>
</dbReference>
<dbReference type="PDB" id="2BNY">
    <property type="method" value="X-ray"/>
    <property type="resolution" value="3.00 A"/>
    <property type="chains" value="A/B/C=2-130"/>
</dbReference>
<dbReference type="PDB" id="2BQ5">
    <property type="method" value="X-ray"/>
    <property type="resolution" value="2.91 A"/>
    <property type="chains" value="A/B/C=2-130"/>
</dbReference>
<dbReference type="PDB" id="2BS0">
    <property type="method" value="X-ray"/>
    <property type="resolution" value="2.45 A"/>
    <property type="chains" value="A/B/C=2-130"/>
</dbReference>
<dbReference type="PDB" id="2BS1">
    <property type="method" value="X-ray"/>
    <property type="resolution" value="2.80 A"/>
    <property type="chains" value="A/B/C=2-130"/>
</dbReference>
<dbReference type="PDB" id="2BU1">
    <property type="method" value="X-ray"/>
    <property type="resolution" value="2.20 A"/>
    <property type="chains" value="A/B/C=2-130"/>
</dbReference>
<dbReference type="PDB" id="2C4Q">
    <property type="method" value="X-ray"/>
    <property type="resolution" value="2.38 A"/>
    <property type="chains" value="A/B/C=2-130"/>
</dbReference>
<dbReference type="PDB" id="2C4Y">
    <property type="method" value="X-ray"/>
    <property type="resolution" value="2.68 A"/>
    <property type="chains" value="A/B/C=2-130"/>
</dbReference>
<dbReference type="PDB" id="2C4Z">
    <property type="method" value="X-ray"/>
    <property type="resolution" value="2.60 A"/>
    <property type="chains" value="A/B/C=2-130"/>
</dbReference>
<dbReference type="PDB" id="2C50">
    <property type="method" value="X-ray"/>
    <property type="resolution" value="2.65 A"/>
    <property type="chains" value="A/B/C=2-130"/>
</dbReference>
<dbReference type="PDB" id="2C51">
    <property type="method" value="X-ray"/>
    <property type="resolution" value="2.80 A"/>
    <property type="chains" value="A/B/C=2-130"/>
</dbReference>
<dbReference type="PDB" id="2IZ8">
    <property type="method" value="X-ray"/>
    <property type="resolution" value="3.30 A"/>
    <property type="chains" value="A/B/C=2-130"/>
</dbReference>
<dbReference type="PDB" id="2IZ9">
    <property type="method" value="X-ray"/>
    <property type="resolution" value="2.85 A"/>
    <property type="chains" value="A/B/C=2-130"/>
</dbReference>
<dbReference type="PDB" id="2IZM">
    <property type="method" value="X-ray"/>
    <property type="resolution" value="2.70 A"/>
    <property type="chains" value="A/B/C=2-130"/>
</dbReference>
<dbReference type="PDB" id="2IZN">
    <property type="method" value="X-ray"/>
    <property type="resolution" value="2.56 A"/>
    <property type="chains" value="A/B/C=2-130"/>
</dbReference>
<dbReference type="PDB" id="2MS2">
    <property type="method" value="X-ray"/>
    <property type="resolution" value="2.80 A"/>
    <property type="chains" value="A/B/C=2-130"/>
</dbReference>
<dbReference type="PDB" id="2VTU">
    <property type="method" value="X-ray"/>
    <property type="resolution" value="3.50 A"/>
    <property type="chains" value="J/L=2-130"/>
</dbReference>
<dbReference type="PDB" id="2WBH">
    <property type="method" value="X-ray"/>
    <property type="resolution" value="4.70 A"/>
    <property type="chains" value="A/B/C=2-130"/>
</dbReference>
<dbReference type="PDB" id="4BP7">
    <property type="method" value="EM"/>
    <property type="resolution" value="39.00 A"/>
    <property type="chains" value="A0/A1/A2/A3/A4/A5/A6/A7/A8/A9/AA/AB/AC/AD/AE/AF/AG/AH/AI/AJ/AK/AL/AM/AN/AO/AP/AQ/AR/AS/AT/AU/AV/AW/AX/AY/AZ/Aa/Ab/Ac/Ad/Ae/Af/Ag/Ah/Ai/Aj/Ak/Al/Am/An/Ao/Ap/Aq/Ar/As/At/Au/Av/Aw/Ax/B0/B1/B2/B3/B4/B5/B6/B7/B8/B9/BA=2-130"/>
</dbReference>
<dbReference type="PDB" id="4ZOR">
    <property type="method" value="X-ray"/>
    <property type="resolution" value="2.20 A"/>
    <property type="chains" value="A/B/C/D/E=2-130"/>
</dbReference>
<dbReference type="PDB" id="5MSF">
    <property type="method" value="X-ray"/>
    <property type="resolution" value="2.80 A"/>
    <property type="chains" value="A/B/C=2-130"/>
</dbReference>
<dbReference type="PDB" id="5TC1">
    <property type="method" value="EM"/>
    <property type="resolution" value="3.60 A"/>
    <property type="chains" value="A/B/C/D/E/F/G/H=1-130"/>
</dbReference>
<dbReference type="PDB" id="6MSF">
    <property type="method" value="X-ray"/>
    <property type="resolution" value="2.80 A"/>
    <property type="chains" value="A/B/C=2-130"/>
</dbReference>
<dbReference type="PDB" id="6RRS">
    <property type="method" value="EM"/>
    <property type="resolution" value="3.90 A"/>
    <property type="chains" value="A/B/C=1-130"/>
</dbReference>
<dbReference type="PDB" id="6RRT">
    <property type="method" value="EM"/>
    <property type="resolution" value="6.00 A"/>
    <property type="chains" value="A/B/C/D=1-130"/>
</dbReference>
<dbReference type="PDB" id="7MSF">
    <property type="method" value="X-ray"/>
    <property type="resolution" value="2.80 A"/>
    <property type="chains" value="A/B/C=2-130"/>
</dbReference>
<dbReference type="PDB" id="8Y3N">
    <property type="method" value="EM"/>
    <property type="resolution" value="3.80 A"/>
    <property type="chains" value="A/B/C/D=2-130"/>
</dbReference>
<dbReference type="PDB" id="8Y3T">
    <property type="method" value="EM"/>
    <property type="resolution" value="2.61 A"/>
    <property type="chains" value="A/B=2-130"/>
</dbReference>
<dbReference type="PDB" id="8Y3V">
    <property type="method" value="EM"/>
    <property type="resolution" value="3.46 A"/>
    <property type="chains" value="A/B/C/D=2-130"/>
</dbReference>
<dbReference type="PDBsum" id="1AQ3"/>
<dbReference type="PDBsum" id="1AQ4"/>
<dbReference type="PDBsum" id="1BMS"/>
<dbReference type="PDBsum" id="1MSC"/>
<dbReference type="PDBsum" id="1MST"/>
<dbReference type="PDBsum" id="1MVA"/>
<dbReference type="PDBsum" id="1MVB"/>
<dbReference type="PDBsum" id="1U1Y"/>
<dbReference type="PDBsum" id="1ZDH"/>
<dbReference type="PDBsum" id="1ZDI"/>
<dbReference type="PDBsum" id="1ZDJ"/>
<dbReference type="PDBsum" id="1ZDK"/>
<dbReference type="PDBsum" id="1ZSE"/>
<dbReference type="PDBsum" id="2B2D"/>
<dbReference type="PDBsum" id="2B2E"/>
<dbReference type="PDBsum" id="2B2G"/>
<dbReference type="PDBsum" id="2BNY"/>
<dbReference type="PDBsum" id="2BQ5"/>
<dbReference type="PDBsum" id="2BS0"/>
<dbReference type="PDBsum" id="2BS1"/>
<dbReference type="PDBsum" id="2BU1"/>
<dbReference type="PDBsum" id="2C4Q"/>
<dbReference type="PDBsum" id="2C4Y"/>
<dbReference type="PDBsum" id="2C4Z"/>
<dbReference type="PDBsum" id="2C50"/>
<dbReference type="PDBsum" id="2C51"/>
<dbReference type="PDBsum" id="2IZ8"/>
<dbReference type="PDBsum" id="2IZ9"/>
<dbReference type="PDBsum" id="2IZM"/>
<dbReference type="PDBsum" id="2IZN"/>
<dbReference type="PDBsum" id="2MS2"/>
<dbReference type="PDBsum" id="2VTU"/>
<dbReference type="PDBsum" id="2WBH"/>
<dbReference type="PDBsum" id="4BP7"/>
<dbReference type="PDBsum" id="4ZOR"/>
<dbReference type="PDBsum" id="5MSF"/>
<dbReference type="PDBsum" id="5TC1"/>
<dbReference type="PDBsum" id="6MSF"/>
<dbReference type="PDBsum" id="6RRS"/>
<dbReference type="PDBsum" id="6RRT"/>
<dbReference type="PDBsum" id="7MSF"/>
<dbReference type="PDBsum" id="8Y3N"/>
<dbReference type="PDBsum" id="8Y3T"/>
<dbReference type="PDBsum" id="8Y3V"/>
<dbReference type="EMDB" id="EMD-4989"/>
<dbReference type="EMDB" id="EMD-4990"/>
<dbReference type="EMDB" id="EMD-8397"/>
<dbReference type="SMR" id="P03612"/>
<dbReference type="DIP" id="DIP-37669N"/>
<dbReference type="GeneID" id="1260899"/>
<dbReference type="OrthoDB" id="35541at10239"/>
<dbReference type="EvolutionaryTrace" id="P03612"/>
<dbReference type="Proteomes" id="UP000002127">
    <property type="component" value="Genome"/>
</dbReference>
<dbReference type="GO" id="GO:0039617">
    <property type="term" value="C:T=3 icosahedral viral capsid"/>
    <property type="evidence" value="ECO:0000314"/>
    <property type="project" value="UniProtKB"/>
</dbReference>
<dbReference type="GO" id="GO:0042802">
    <property type="term" value="F:identical protein binding"/>
    <property type="evidence" value="ECO:0000353"/>
    <property type="project" value="IntAct"/>
</dbReference>
<dbReference type="GO" id="GO:0003723">
    <property type="term" value="F:RNA binding"/>
    <property type="evidence" value="ECO:0000314"/>
    <property type="project" value="UniProtKB"/>
</dbReference>
<dbReference type="GO" id="GO:0005198">
    <property type="term" value="F:structural molecule activity"/>
    <property type="evidence" value="ECO:0007669"/>
    <property type="project" value="InterPro"/>
</dbReference>
<dbReference type="GO" id="GO:1904972">
    <property type="term" value="P:negative regulation of viral translation"/>
    <property type="evidence" value="ECO:0000314"/>
    <property type="project" value="CACAO"/>
</dbReference>
<dbReference type="GO" id="GO:0006417">
    <property type="term" value="P:regulation of translation"/>
    <property type="evidence" value="ECO:0007669"/>
    <property type="project" value="UniProtKB-KW"/>
</dbReference>
<dbReference type="FunFam" id="3.30.380.10:FF:000001">
    <property type="entry name" value="Capsid protein"/>
    <property type="match status" value="1"/>
</dbReference>
<dbReference type="Gene3D" id="3.30.380.10">
    <property type="entry name" value="MS2 Viral Coat Protein"/>
    <property type="match status" value="1"/>
</dbReference>
<dbReference type="InterPro" id="IPR002703">
    <property type="entry name" value="Levivir_coat"/>
</dbReference>
<dbReference type="InterPro" id="IPR015954">
    <property type="entry name" value="Phage_RNA-type_capsid"/>
</dbReference>
<dbReference type="Pfam" id="PF01819">
    <property type="entry name" value="Levi_coat"/>
    <property type="match status" value="1"/>
</dbReference>
<dbReference type="SUPFAM" id="SSF55405">
    <property type="entry name" value="RNA bacteriophage capsid protein"/>
    <property type="match status" value="1"/>
</dbReference>
<sequence>MASNFTQFVLVDNGGTGDVTVAPSNFANGVAEWISSNSRSQAYKVTCSVRQSSAQNRKYTIKVEVPKVATQTVGGVELPVAAWRSYLNMELTIPIFATNSDCELIVKAMQGLLKDGNPIPSAIAANSGIY</sequence>
<name>CAPSD_BPMS2</name>
<organismHost>
    <name type="scientific">Escherichia coli</name>
    <dbReference type="NCBI Taxonomy" id="562"/>
</organismHost>
<organism>
    <name type="scientific">Escherichia phage MS2</name>
    <name type="common">Bacteriophage MS2</name>
    <dbReference type="NCBI Taxonomy" id="12022"/>
    <lineage>
        <taxon>Viruses</taxon>
        <taxon>Riboviria</taxon>
        <taxon>Orthornavirae</taxon>
        <taxon>Lenarviricota</taxon>
        <taxon>Leviviricetes</taxon>
        <taxon>Norzivirales</taxon>
        <taxon>Fiersviridae</taxon>
        <taxon>Emesvirus</taxon>
        <taxon>Emesvirus zinderi</taxon>
    </lineage>
</organism>
<proteinExistence type="evidence at protein level"/>
<keyword id="KW-0002">3D-structure</keyword>
<keyword id="KW-0167">Capsid protein</keyword>
<keyword id="KW-1185">Reference proteome</keyword>
<keyword id="KW-0694">RNA-binding</keyword>
<keyword id="KW-1142">T=3 icosahedral capsid protein</keyword>
<keyword id="KW-0810">Translation regulation</keyword>
<keyword id="KW-0946">Virion</keyword>